<protein>
    <recommendedName>
        <fullName evidence="1">ATPase get3</fullName>
        <ecNumber evidence="1">3.6.-.-</ecNumber>
    </recommendedName>
    <alternativeName>
        <fullName evidence="1">Arsenical pump-driving ATPase</fullName>
    </alternativeName>
    <alternativeName>
        <fullName evidence="1">Arsenite-stimulated ATPase</fullName>
    </alternativeName>
    <alternativeName>
        <fullName evidence="1">Golgi to ER traffic protein 3</fullName>
    </alternativeName>
    <alternativeName>
        <fullName evidence="1">Guided entry of tail-anchored proteins 3</fullName>
    </alternativeName>
</protein>
<reference key="1">
    <citation type="journal article" date="2008" name="PLoS Genet.">
        <title>Genomic islands in the pathogenic filamentous fungus Aspergillus fumigatus.</title>
        <authorList>
            <person name="Fedorova N.D."/>
            <person name="Khaldi N."/>
            <person name="Joardar V.S."/>
            <person name="Maiti R."/>
            <person name="Amedeo P."/>
            <person name="Anderson M.J."/>
            <person name="Crabtree J."/>
            <person name="Silva J.C."/>
            <person name="Badger J.H."/>
            <person name="Albarraq A."/>
            <person name="Angiuoli S."/>
            <person name="Bussey H."/>
            <person name="Bowyer P."/>
            <person name="Cotty P.J."/>
            <person name="Dyer P.S."/>
            <person name="Egan A."/>
            <person name="Galens K."/>
            <person name="Fraser-Liggett C.M."/>
            <person name="Haas B.J."/>
            <person name="Inman J.M."/>
            <person name="Kent R."/>
            <person name="Lemieux S."/>
            <person name="Malavazi I."/>
            <person name="Orvis J."/>
            <person name="Roemer T."/>
            <person name="Ronning C.M."/>
            <person name="Sundaram J.P."/>
            <person name="Sutton G."/>
            <person name="Turner G."/>
            <person name="Venter J.C."/>
            <person name="White O.R."/>
            <person name="Whitty B.R."/>
            <person name="Youngman P."/>
            <person name="Wolfe K.H."/>
            <person name="Goldman G.H."/>
            <person name="Wortman J.R."/>
            <person name="Jiang B."/>
            <person name="Denning D.W."/>
            <person name="Nierman W.C."/>
        </authorList>
    </citation>
    <scope>NUCLEOTIDE SEQUENCE [LARGE SCALE GENOMIC DNA]</scope>
    <source>
        <strain>ATCC 1007 / CBS 513.65 / DSM 816 / NCTC 3887 / NRRL 1 / QM 1276 / 107</strain>
    </source>
</reference>
<evidence type="ECO:0000255" key="1">
    <source>
        <dbReference type="HAMAP-Rule" id="MF_03112"/>
    </source>
</evidence>
<proteinExistence type="inferred from homology"/>
<sequence>MSSAAVVHHDDLMEPTLQSIINQKTLRWIFVGGKGGVGKTTTSCSLAIQLAKARKSVLLISTDPAHNLSDAFGQKFGKEARLVDGYSNLSAMEIDPNGSIQDLLASGEAQGEDPMAGLGMGNMMQDLAFSIPGVDEAMSFAEVLKQVKSLSYEVIVFDTAPTGHTLRFLQFPTVLEKALAKLSQLSSQFGPMLNSILGARGGLPGGQNIDELLQKMESLRETISEVNTQFKNPDMTTFVCVCIAEFLSLYETERMIQELTSYSIDTHAIVVNQLLFPKKGSECEQCNARRKMQQKYLEQIEELYEDFNVVRMPLLVEEVRGKEKLEKFSEMLVHPYVPPQ</sequence>
<feature type="chain" id="PRO_0000388187" description="ATPase get3">
    <location>
        <begin position="1"/>
        <end position="340"/>
    </location>
</feature>
<feature type="active site" evidence="1">
    <location>
        <position position="63"/>
    </location>
</feature>
<feature type="binding site" evidence="1">
    <location>
        <begin position="34"/>
        <end position="41"/>
    </location>
    <ligand>
        <name>ATP</name>
        <dbReference type="ChEBI" id="CHEBI:30616"/>
    </ligand>
</feature>
<feature type="binding site" evidence="1">
    <location>
        <position position="245"/>
    </location>
    <ligand>
        <name>ATP</name>
        <dbReference type="ChEBI" id="CHEBI:30616"/>
    </ligand>
</feature>
<feature type="binding site" evidence="1">
    <location>
        <position position="272"/>
    </location>
    <ligand>
        <name>ATP</name>
        <dbReference type="ChEBI" id="CHEBI:30616"/>
    </ligand>
</feature>
<feature type="binding site" evidence="1">
    <location>
        <position position="283"/>
    </location>
    <ligand>
        <name>Zn(2+)</name>
        <dbReference type="ChEBI" id="CHEBI:29105"/>
        <note>ligand shared between dimeric partners</note>
    </ligand>
</feature>
<feature type="binding site" evidence="1">
    <location>
        <position position="286"/>
    </location>
    <ligand>
        <name>Zn(2+)</name>
        <dbReference type="ChEBI" id="CHEBI:29105"/>
        <note>ligand shared between dimeric partners</note>
    </ligand>
</feature>
<gene>
    <name type="primary">get3</name>
    <name type="ORF">ACLA_039240</name>
</gene>
<accession>A1CKN5</accession>
<keyword id="KW-0067">ATP-binding</keyword>
<keyword id="KW-0963">Cytoplasm</keyword>
<keyword id="KW-0256">Endoplasmic reticulum</keyword>
<keyword id="KW-0378">Hydrolase</keyword>
<keyword id="KW-0479">Metal-binding</keyword>
<keyword id="KW-0547">Nucleotide-binding</keyword>
<keyword id="KW-1185">Reference proteome</keyword>
<keyword id="KW-0813">Transport</keyword>
<keyword id="KW-0862">Zinc</keyword>
<organism>
    <name type="scientific">Aspergillus clavatus (strain ATCC 1007 / CBS 513.65 / DSM 816 / NCTC 3887 / NRRL 1 / QM 1276 / 107)</name>
    <dbReference type="NCBI Taxonomy" id="344612"/>
    <lineage>
        <taxon>Eukaryota</taxon>
        <taxon>Fungi</taxon>
        <taxon>Dikarya</taxon>
        <taxon>Ascomycota</taxon>
        <taxon>Pezizomycotina</taxon>
        <taxon>Eurotiomycetes</taxon>
        <taxon>Eurotiomycetidae</taxon>
        <taxon>Eurotiales</taxon>
        <taxon>Aspergillaceae</taxon>
        <taxon>Aspergillus</taxon>
        <taxon>Aspergillus subgen. Fumigati</taxon>
    </lineage>
</organism>
<name>GET3_ASPCL</name>
<comment type="function">
    <text evidence="1">ATPase required for the post-translational delivery of tail-anchored (TA) proteins to the endoplasmic reticulum. Recognizes and selectively binds the transmembrane domain of TA proteins in the cytosol. This complex then targets to the endoplasmic reticulum by membrane-bound receptors, where the tail-anchored protein is released for insertion. This process is regulated by ATP binding and hydrolysis. ATP binding drives the homodimer towards the closed dimer state, facilitating recognition of newly synthesized TA membrane proteins. ATP hydrolysis is required for insertion. Subsequently, the homodimer reverts towards the open dimer state, lowering its affinity for the membrane-bound receptor, and returning it to the cytosol to initiate a new round of targeting.</text>
</comment>
<comment type="subunit">
    <text evidence="1">Homodimer.</text>
</comment>
<comment type="subcellular location">
    <subcellularLocation>
        <location evidence="1">Cytoplasm</location>
    </subcellularLocation>
    <subcellularLocation>
        <location evidence="1">Endoplasmic reticulum</location>
    </subcellularLocation>
</comment>
<comment type="similarity">
    <text evidence="1">Belongs to the arsA ATPase family.</text>
</comment>
<dbReference type="EC" id="3.6.-.-" evidence="1"/>
<dbReference type="EMBL" id="DS027056">
    <property type="protein sequence ID" value="EAW09709.1"/>
    <property type="molecule type" value="Genomic_DNA"/>
</dbReference>
<dbReference type="RefSeq" id="XP_001271135.1">
    <property type="nucleotide sequence ID" value="XM_001271134.1"/>
</dbReference>
<dbReference type="SMR" id="A1CKN5"/>
<dbReference type="STRING" id="344612.A1CKN5"/>
<dbReference type="EnsemblFungi" id="EAW09709">
    <property type="protein sequence ID" value="EAW09709"/>
    <property type="gene ID" value="ACLA_039240"/>
</dbReference>
<dbReference type="GeneID" id="4703578"/>
<dbReference type="KEGG" id="act:ACLA_039240"/>
<dbReference type="VEuPathDB" id="FungiDB:ACLA_039240"/>
<dbReference type="eggNOG" id="KOG2825">
    <property type="taxonomic scope" value="Eukaryota"/>
</dbReference>
<dbReference type="HOGENOM" id="CLU_040761_0_0_1"/>
<dbReference type="OMA" id="MDAPYEF"/>
<dbReference type="OrthoDB" id="1770at2759"/>
<dbReference type="Proteomes" id="UP000006701">
    <property type="component" value="Unassembled WGS sequence"/>
</dbReference>
<dbReference type="GO" id="GO:0043529">
    <property type="term" value="C:GET complex"/>
    <property type="evidence" value="ECO:0007669"/>
    <property type="project" value="EnsemblFungi"/>
</dbReference>
<dbReference type="GO" id="GO:0005524">
    <property type="term" value="F:ATP binding"/>
    <property type="evidence" value="ECO:0007669"/>
    <property type="project" value="UniProtKB-UniRule"/>
</dbReference>
<dbReference type="GO" id="GO:0016887">
    <property type="term" value="F:ATP hydrolysis activity"/>
    <property type="evidence" value="ECO:0007669"/>
    <property type="project" value="EnsemblFungi"/>
</dbReference>
<dbReference type="GO" id="GO:0005085">
    <property type="term" value="F:guanyl-nucleotide exchange factor activity"/>
    <property type="evidence" value="ECO:0007669"/>
    <property type="project" value="EnsemblFungi"/>
</dbReference>
<dbReference type="GO" id="GO:0042802">
    <property type="term" value="F:identical protein binding"/>
    <property type="evidence" value="ECO:0007669"/>
    <property type="project" value="EnsemblFungi"/>
</dbReference>
<dbReference type="GO" id="GO:0046872">
    <property type="term" value="F:metal ion binding"/>
    <property type="evidence" value="ECO:0007669"/>
    <property type="project" value="UniProtKB-KW"/>
</dbReference>
<dbReference type="GO" id="GO:0044183">
    <property type="term" value="F:protein folding chaperone"/>
    <property type="evidence" value="ECO:0007669"/>
    <property type="project" value="EnsemblFungi"/>
</dbReference>
<dbReference type="GO" id="GO:0051082">
    <property type="term" value="F:unfolded protein binding"/>
    <property type="evidence" value="ECO:0007669"/>
    <property type="project" value="EnsemblFungi"/>
</dbReference>
<dbReference type="GO" id="GO:0034599">
    <property type="term" value="P:cellular response to oxidative stress"/>
    <property type="evidence" value="ECO:0007669"/>
    <property type="project" value="EnsemblFungi"/>
</dbReference>
<dbReference type="GO" id="GO:0000750">
    <property type="term" value="P:pheromone-dependent signal transduction involved in conjugation with cellular fusion"/>
    <property type="evidence" value="ECO:0007669"/>
    <property type="project" value="EnsemblFungi"/>
</dbReference>
<dbReference type="GO" id="GO:0006620">
    <property type="term" value="P:post-translational protein targeting to endoplasmic reticulum membrane"/>
    <property type="evidence" value="ECO:0007669"/>
    <property type="project" value="EnsemblFungi"/>
</dbReference>
<dbReference type="GO" id="GO:0009408">
    <property type="term" value="P:response to heat"/>
    <property type="evidence" value="ECO:0007669"/>
    <property type="project" value="EnsemblFungi"/>
</dbReference>
<dbReference type="GO" id="GO:0010038">
    <property type="term" value="P:response to metal ion"/>
    <property type="evidence" value="ECO:0007669"/>
    <property type="project" value="EnsemblFungi"/>
</dbReference>
<dbReference type="GO" id="GO:0006890">
    <property type="term" value="P:retrograde vesicle-mediated transport, Golgi to endoplasmic reticulum"/>
    <property type="evidence" value="ECO:0007669"/>
    <property type="project" value="EnsemblFungi"/>
</dbReference>
<dbReference type="GO" id="GO:0071816">
    <property type="term" value="P:tail-anchored membrane protein insertion into ER membrane"/>
    <property type="evidence" value="ECO:0007669"/>
    <property type="project" value="EnsemblFungi"/>
</dbReference>
<dbReference type="CDD" id="cd02035">
    <property type="entry name" value="ArsA"/>
    <property type="match status" value="1"/>
</dbReference>
<dbReference type="FunFam" id="3.40.50.300:FF:000235">
    <property type="entry name" value="ATPase ASNA1"/>
    <property type="match status" value="1"/>
</dbReference>
<dbReference type="Gene3D" id="3.40.50.300">
    <property type="entry name" value="P-loop containing nucleotide triphosphate hydrolases"/>
    <property type="match status" value="1"/>
</dbReference>
<dbReference type="HAMAP" id="MF_03112">
    <property type="entry name" value="Asna1_Get3"/>
    <property type="match status" value="1"/>
</dbReference>
<dbReference type="InterPro" id="IPR025723">
    <property type="entry name" value="Anion-transp_ATPase-like_dom"/>
</dbReference>
<dbReference type="InterPro" id="IPR016300">
    <property type="entry name" value="ATPase_ArsA/GET3"/>
</dbReference>
<dbReference type="InterPro" id="IPR027542">
    <property type="entry name" value="ATPase_ArsA/GET3_euk"/>
</dbReference>
<dbReference type="InterPro" id="IPR027417">
    <property type="entry name" value="P-loop_NTPase"/>
</dbReference>
<dbReference type="NCBIfam" id="TIGR00345">
    <property type="entry name" value="GET3_arsA_TRC40"/>
    <property type="match status" value="1"/>
</dbReference>
<dbReference type="PANTHER" id="PTHR10803">
    <property type="entry name" value="ARSENICAL PUMP-DRIVING ATPASE ARSENITE-TRANSLOCATING ATPASE"/>
    <property type="match status" value="1"/>
</dbReference>
<dbReference type="PANTHER" id="PTHR10803:SF3">
    <property type="entry name" value="ATPASE GET3"/>
    <property type="match status" value="1"/>
</dbReference>
<dbReference type="Pfam" id="PF02374">
    <property type="entry name" value="ArsA_ATPase"/>
    <property type="match status" value="1"/>
</dbReference>
<dbReference type="SUPFAM" id="SSF52540">
    <property type="entry name" value="P-loop containing nucleoside triphosphate hydrolases"/>
    <property type="match status" value="1"/>
</dbReference>